<organism>
    <name type="scientific">Homo sapiens</name>
    <name type="common">Human</name>
    <dbReference type="NCBI Taxonomy" id="9606"/>
    <lineage>
        <taxon>Eukaryota</taxon>
        <taxon>Metazoa</taxon>
        <taxon>Chordata</taxon>
        <taxon>Craniata</taxon>
        <taxon>Vertebrata</taxon>
        <taxon>Euteleostomi</taxon>
        <taxon>Mammalia</taxon>
        <taxon>Eutheria</taxon>
        <taxon>Euarchontoglires</taxon>
        <taxon>Primates</taxon>
        <taxon>Haplorrhini</taxon>
        <taxon>Catarrhini</taxon>
        <taxon>Hominidae</taxon>
        <taxon>Homo</taxon>
    </lineage>
</organism>
<protein>
    <recommendedName>
        <fullName evidence="11">Transmembrane protein 131-like</fullName>
    </recommendedName>
</protein>
<evidence type="ECO:0000255" key="1"/>
<evidence type="ECO:0000256" key="2">
    <source>
        <dbReference type="SAM" id="MobiDB-lite"/>
    </source>
</evidence>
<evidence type="ECO:0000269" key="3">
    <source>
    </source>
</evidence>
<evidence type="ECO:0000269" key="4">
    <source>
    </source>
</evidence>
<evidence type="ECO:0000303" key="5">
    <source>
    </source>
</evidence>
<evidence type="ECO:0000303" key="6">
    <source>
    </source>
</evidence>
<evidence type="ECO:0000303" key="7">
    <source>
    </source>
</evidence>
<evidence type="ECO:0000303" key="8">
    <source>
    </source>
</evidence>
<evidence type="ECO:0000303" key="9">
    <source ref="3"/>
</evidence>
<evidence type="ECO:0000305" key="10"/>
<evidence type="ECO:0000312" key="11">
    <source>
        <dbReference type="HGNC" id="HGNC:29146"/>
    </source>
</evidence>
<evidence type="ECO:0007744" key="12">
    <source>
    </source>
</evidence>
<sequence length="1609" mass="179339">MAGLRRPQPGCYCRTAAAVNLLLGVFQVLLPCCRPGGAQGQAIEPLPNVVELWQAEEGELLLPTQGDSEEGLEEPSQEQSFSDKLFSGKGLHFQPSVLDFGIQFLGHPVAKILHAYNPSRDSEVVVNSVFAAAGHFHVPPVPCRVIPAMGKTSFRIIFLPTEEGSIESSLFINTSSYGVLSYHVSGIGTRRISTEGSAKQLPNAYFLLPKVQSIQLSQMQAETTNTSLLQVQLECSLHNKVCQQLKGCYLESDDVLRLQMSIMVTMENFSKEFEENTQHLLDHLSIVYVATDESETSDDSAVNMYILHSGNSLIWIQDIRHFSQRDALSLQFEPVLLPTSTTNFTKIASFTCKATSCDSGIIEDVKKTTHTPTLKACLFSSVAQGYFRMDSSATQFHIETHENTSGLWSIWYRNHFDRSVVLNDVFLSKETKHMLKILNFTGPLFLPPGCWNIFSLKLAVKDIAINLFTNVFLTTNIGAIFAIPLQIYSAPTKEGSLGFEVIAHCGMHYFMGKSKAGNPNWNGSLSLDQSTWNVDSELANKLYERWKKYKNGDVCKRNVLGTTRFAHLKKSKESESFVFFLPRLIAEPGLMLNFSATALRSRMIKYFVVQNPSSWPVSLQLLPLSLYPKPEALVHLLHRWFGTDMQMINFTTGEFQLTEACPYLGTHSEESRFGILHLHLQPLEMKRVGVVFTPADYGKVTSLILIRNNLTVIDMIGVEGFGARELLKVGGRLPGAGGSLRFKVPESTLMDCRRQLKDSKQILSITKNFKVENIGPLPITVSSLKINGYNCQGYGFEVLDCHQFSLDPNTSRDISIVFTPDFTSSWVIRDLSLVTAADLEFRFTLNVTLPHHLLPLCADVVPGPSWEESFWRLTVFFVSLSLLGVILIAFQQAQYILMEFMKTRQRQNASSSSQQNNGPMDVISPHSYKSNCKNFLDTYGPSDKGRGKNCLPVNTPQSRIQNAAKRSPATYGHSQKKHKCSVYYSKHKTSTAAASSTSTTTEEKQTSPLGSSLPAAKEDICTDAMRENWISLRYASGINVNLQKNLTLPKNLLNKEENTLKNTIVFSNPSSECSMKEGIQTCMFPKETDIKTSENTAEFKERELCPLKTSKKLPENHLPRNSPQYHQPDLPEISRKNNGNNQQVPVKNEVDHCENLKKVDTKPSSEKKIHKTSREDMFSEKQDIPFVEQEDPYRKKKLQEKREGNLQNLNWSKSRTCRKNKKRGVAPVSRPPEQSDLKLVCSDFERSELSSDINVRSWCIQESTREVCKADAEIASSLPAAQREAEGYYQKPEKKCVDKFCSDSSSDCGSSSGSVRASRGSWGSWSSTSSSDGDKKPMVDAQHFLPAGDSVSQNDFPSEAPISLNLSHNICNPMTVNSLPQYAEPSCPSLPAGPTGVEEDKGLYSPGDLWPTPPVCVTSSLNCTLENGVPCVIQESAPVHNSFIDWSATCEGQFSSAYCPLELNDYNAFPEENMNYANGFPCPADVQTDFIDHNSQSTWNTPPNMPAAWGHASFISSPPYLTSTRSLSPMSGLFGSIWAPQSDVYENCCPINPTTEHSTHMENQAVVCKEYYPGFNPFRAYMNLDIWTTTANRNANFPLSRDSSYCGNV</sequence>
<feature type="signal peptide" evidence="1">
    <location>
        <begin position="1"/>
        <end position="40"/>
    </location>
</feature>
<feature type="chain" id="PRO_0000328865" description="Transmembrane protein 131-like">
    <location>
        <begin position="41"/>
        <end position="1609"/>
    </location>
</feature>
<feature type="topological domain" description="Extracellular" evidence="1">
    <location>
        <begin position="41"/>
        <end position="869"/>
    </location>
</feature>
<feature type="transmembrane region" description="Helical" evidence="1">
    <location>
        <begin position="870"/>
        <end position="890"/>
    </location>
</feature>
<feature type="topological domain" description="Cytoplasmic" evidence="1">
    <location>
        <begin position="891"/>
        <end position="1609"/>
    </location>
</feature>
<feature type="region of interest" description="Required for Wnt-signaling inhibition and LRP6 degradation" evidence="4">
    <location>
        <begin position="696"/>
        <end position="916"/>
    </location>
</feature>
<feature type="region of interest" description="Disordered" evidence="2">
    <location>
        <begin position="946"/>
        <end position="974"/>
    </location>
</feature>
<feature type="region of interest" description="Disordered" evidence="2">
    <location>
        <begin position="991"/>
        <end position="1014"/>
    </location>
</feature>
<feature type="region of interest" description="Disordered" evidence="2">
    <location>
        <begin position="1108"/>
        <end position="1144"/>
    </location>
</feature>
<feature type="region of interest" description="Disordered" evidence="2">
    <location>
        <begin position="1159"/>
        <end position="1178"/>
    </location>
</feature>
<feature type="region of interest" description="Disordered" evidence="2">
    <location>
        <begin position="1304"/>
        <end position="1340"/>
    </location>
</feature>
<feature type="compositionally biased region" description="Polar residues" evidence="2">
    <location>
        <begin position="952"/>
        <end position="961"/>
    </location>
</feature>
<feature type="compositionally biased region" description="Low complexity" evidence="2">
    <location>
        <begin position="991"/>
        <end position="1000"/>
    </location>
</feature>
<feature type="compositionally biased region" description="Low complexity" evidence="2">
    <location>
        <begin position="1304"/>
        <end position="1331"/>
    </location>
</feature>
<feature type="modified residue" description="Phosphoserine" evidence="12">
    <location>
        <position position="1122"/>
    </location>
</feature>
<feature type="glycosylation site" description="N-linked (GlcNAc...) asparagine" evidence="1">
    <location>
        <position position="343"/>
    </location>
</feature>
<feature type="glycosylation site" description="N-linked (GlcNAc...) asparagine" evidence="1">
    <location>
        <position position="439"/>
    </location>
</feature>
<feature type="glycosylation site" description="N-linked (GlcNAc...) asparagine" evidence="1">
    <location>
        <position position="522"/>
    </location>
</feature>
<feature type="glycosylation site" description="N-linked (GlcNAc...) asparagine" evidence="1">
    <location>
        <position position="593"/>
    </location>
</feature>
<feature type="glycosylation site" description="N-linked (GlcNAc...) asparagine" evidence="1">
    <location>
        <position position="709"/>
    </location>
</feature>
<feature type="glycosylation site" description="N-linked (GlcNAc...) asparagine" evidence="1">
    <location>
        <position position="846"/>
    </location>
</feature>
<feature type="splice variant" id="VSP_032826" description="In isoform 2." evidence="5">
    <location>
        <begin position="1"/>
        <end position="370"/>
    </location>
</feature>
<feature type="splice variant" id="VSP_057633" description="In isoform 5.">
    <location>
        <begin position="1"/>
        <end position="148"/>
    </location>
</feature>
<feature type="splice variant" id="VSP_032827" description="In isoform 3, isoform 4 and isoform 5." evidence="6 7 9">
    <original>K</original>
    <variation>KA</variation>
    <location>
        <position position="353"/>
    </location>
</feature>
<feature type="splice variant" id="VSP_032828" description="In isoform 2." evidence="5">
    <original>TPTLKACLFS</original>
    <variation>MLLVLECVLF</variation>
    <location>
        <begin position="371"/>
        <end position="380"/>
    </location>
</feature>
<feature type="splice variant" id="VSP_032829" description="In isoform 3." evidence="7">
    <location>
        <begin position="557"/>
        <end position="640"/>
    </location>
</feature>
<feature type="sequence variant" id="VAR_042551" description="In dbSNP:rs7669418.">
    <original>I</original>
    <variation>V</variation>
    <location>
        <position position="604"/>
    </location>
</feature>
<feature type="sequence variant" id="VAR_042552" description="In dbSNP:rs17370297." evidence="3">
    <original>M</original>
    <variation>T</variation>
    <location>
        <position position="645"/>
    </location>
</feature>
<feature type="sequence variant" id="VAR_042553" description="In dbSNP:rs755078.">
    <original>S</original>
    <variation>Y</variation>
    <location>
        <position position="1110"/>
    </location>
</feature>
<feature type="sequence variant" id="VAR_042554" description="In dbSNP:rs35018723.">
    <original>N</original>
    <variation>S</variation>
    <location>
        <position position="1254"/>
    </location>
</feature>
<feature type="sequence variant" id="VAR_042555" description="In dbSNP:rs35543386.">
    <original>A</original>
    <variation>P</variation>
    <location>
        <position position="1392"/>
    </location>
</feature>
<feature type="sequence conflict" description="In Ref. 4; BAG52515." evidence="10" ref="4">
    <original>F</original>
    <variation>S</variation>
    <location>
        <position position="171"/>
    </location>
</feature>
<comment type="function">
    <molecule>Isoform 1</molecule>
    <text evidence="4">Membrane-associated form that antagonizes canonical Wnt signaling by triggering lysosome-dependent degradation of Wnt-activated LRP6. Regulates thymocyte proliferation.</text>
</comment>
<comment type="subcellular location">
    <subcellularLocation>
        <location evidence="4">Cell membrane</location>
        <topology evidence="10">Single-pass type I membrane protein</topology>
    </subcellularLocation>
    <subcellularLocation>
        <location evidence="4">Cytoplasm</location>
    </subcellularLocation>
    <text evidence="4">During intrathymic development, resides in punctate cytoplasmic structures in DN1 and DN2 cells. In DN3 cells, found in large crescent-shaped membrane structures, which preferentially localize in cell-to-cell contact zones.</text>
</comment>
<comment type="subcellular location">
    <molecule>Isoform 1</molecule>
    <subcellularLocation>
        <location evidence="4">Endoplasmic reticulum</location>
    </subcellularLocation>
    <text evidence="4">Transmembrane localization is essential for Wnt signaling inhibition.</text>
</comment>
<comment type="subcellular location">
    <molecule>Isoform 5</molecule>
    <subcellularLocation>
        <location evidence="4">Cytoplasm</location>
    </subcellularLocation>
    <text evidence="4">Scattered throughout the cytoplasm in small-sized punctate structures.</text>
</comment>
<comment type="alternative products">
    <event type="alternative splicing"/>
    <isoform>
        <id>A2VDJ0-1</id>
        <name>1</name>
        <name evidence="8">L</name>
        <sequence type="displayed"/>
    </isoform>
    <isoform>
        <id>A2VDJ0-2</id>
        <name>2</name>
        <sequence type="described" ref="VSP_032826 VSP_032828"/>
    </isoform>
    <isoform>
        <id>A2VDJ0-3</id>
        <name>3</name>
        <sequence type="described" ref="VSP_032827 VSP_032829"/>
    </isoform>
    <isoform>
        <id>A2VDJ0-5</id>
        <name>4</name>
        <sequence type="described" ref="VSP_032827"/>
    </isoform>
    <isoform>
        <id>A2VDJ0-6</id>
        <name>5</name>
        <name evidence="8">S</name>
        <sequence type="described" ref="VSP_057633 VSP_032827"/>
    </isoform>
</comment>
<comment type="tissue specificity">
    <text evidence="4">Expressed in thymocytes.</text>
</comment>
<comment type="developmental stage">
    <text evidence="4">During intrathymic development, transcript levels strongly increase from pro-DN1 thymocytes to DN3a cells, in which they peak, and drop immediately after beta-selection in their DN3b successors. The subcellular location of the protein also varies, from punctate cytoplasmic structures in DN1 and DN2 cells to large crescent-shaped membrane structures in DN3 cells, which preferentially localize in cell-to-cell contact zones.</text>
</comment>
<comment type="similarity">
    <text evidence="10">Belongs to the TMEM131 family.</text>
</comment>
<proteinExistence type="evidence at protein level"/>
<gene>
    <name evidence="11" type="primary">TMEM131L</name>
    <name evidence="11" type="synonym">KIAA0922</name>
</gene>
<dbReference type="EMBL" id="AL136932">
    <property type="protein sequence ID" value="CAB66866.1"/>
    <property type="molecule type" value="mRNA"/>
</dbReference>
<dbReference type="EMBL" id="AC106865">
    <property type="status" value="NOT_ANNOTATED_CDS"/>
    <property type="molecule type" value="Genomic_DNA"/>
</dbReference>
<dbReference type="EMBL" id="AC116648">
    <property type="status" value="NOT_ANNOTATED_CDS"/>
    <property type="molecule type" value="Genomic_DNA"/>
</dbReference>
<dbReference type="EMBL" id="CH471056">
    <property type="protein sequence ID" value="EAX04957.1"/>
    <property type="molecule type" value="Genomic_DNA"/>
</dbReference>
<dbReference type="EMBL" id="CH471056">
    <property type="protein sequence ID" value="EAX04958.1"/>
    <property type="molecule type" value="Genomic_DNA"/>
</dbReference>
<dbReference type="EMBL" id="AK092270">
    <property type="protein sequence ID" value="BAG52515.1"/>
    <property type="molecule type" value="mRNA"/>
</dbReference>
<dbReference type="EMBL" id="BC044932">
    <property type="protein sequence ID" value="AAH44932.1"/>
    <property type="molecule type" value="mRNA"/>
</dbReference>
<dbReference type="EMBL" id="BC131505">
    <property type="protein sequence ID" value="AAI31506.1"/>
    <property type="molecule type" value="mRNA"/>
</dbReference>
<dbReference type="EMBL" id="AB023139">
    <property type="protein sequence ID" value="BAA76766.1"/>
    <property type="molecule type" value="mRNA"/>
</dbReference>
<dbReference type="CCDS" id="CCDS3783.2">
    <molecule id="A2VDJ0-1"/>
</dbReference>
<dbReference type="CCDS" id="CCDS47148.1">
    <molecule id="A2VDJ0-5"/>
</dbReference>
<dbReference type="RefSeq" id="NP_001124479.1">
    <molecule id="A2VDJ0-5"/>
    <property type="nucleotide sequence ID" value="NM_001131007.2"/>
</dbReference>
<dbReference type="RefSeq" id="NP_056011.3">
    <molecule id="A2VDJ0-1"/>
    <property type="nucleotide sequence ID" value="NM_015196.3"/>
</dbReference>
<dbReference type="RefSeq" id="XP_047305879.1">
    <molecule id="A2VDJ0-3"/>
    <property type="nucleotide sequence ID" value="XM_047449923.1"/>
</dbReference>
<dbReference type="SMR" id="A2VDJ0"/>
<dbReference type="BioGRID" id="116844">
    <property type="interactions" value="149"/>
</dbReference>
<dbReference type="FunCoup" id="A2VDJ0">
    <property type="interactions" value="828"/>
</dbReference>
<dbReference type="IntAct" id="A2VDJ0">
    <property type="interactions" value="57"/>
</dbReference>
<dbReference type="STRING" id="9606.ENSP00000386787"/>
<dbReference type="GlyCosmos" id="A2VDJ0">
    <property type="glycosylation" value="6 sites, No reported glycans"/>
</dbReference>
<dbReference type="GlyGen" id="A2VDJ0">
    <property type="glycosylation" value="15 sites, 6 N-linked glycans (9 sites)"/>
</dbReference>
<dbReference type="iPTMnet" id="A2VDJ0"/>
<dbReference type="PhosphoSitePlus" id="A2VDJ0"/>
<dbReference type="SwissPalm" id="A2VDJ0"/>
<dbReference type="BioMuta" id="TMEM131L"/>
<dbReference type="jPOST" id="A2VDJ0"/>
<dbReference type="MassIVE" id="A2VDJ0"/>
<dbReference type="PaxDb" id="9606-ENSP00000386787"/>
<dbReference type="PeptideAtlas" id="A2VDJ0"/>
<dbReference type="ProteomicsDB" id="541">
    <molecule id="A2VDJ0-1"/>
</dbReference>
<dbReference type="ProteomicsDB" id="542">
    <molecule id="A2VDJ0-2"/>
</dbReference>
<dbReference type="ProteomicsDB" id="543">
    <molecule id="A2VDJ0-3"/>
</dbReference>
<dbReference type="ProteomicsDB" id="544">
    <molecule id="A2VDJ0-5"/>
</dbReference>
<dbReference type="Pumba" id="A2VDJ0"/>
<dbReference type="Antibodypedia" id="57011">
    <property type="antibodies" value="60 antibodies from 12 providers"/>
</dbReference>
<dbReference type="DNASU" id="23240"/>
<dbReference type="Ensembl" id="ENST00000409663.7">
    <molecule id="A2VDJ0-1"/>
    <property type="protein sequence ID" value="ENSP00000386574.3"/>
    <property type="gene ID" value="ENSG00000121210.16"/>
</dbReference>
<dbReference type="Ensembl" id="ENST00000409959.8">
    <molecule id="A2VDJ0-5"/>
    <property type="protein sequence ID" value="ENSP00000386787.3"/>
    <property type="gene ID" value="ENSG00000121210.16"/>
</dbReference>
<dbReference type="GeneID" id="23240"/>
<dbReference type="KEGG" id="hsa:23240"/>
<dbReference type="MANE-Select" id="ENST00000409959.8">
    <molecule id="A2VDJ0-5"/>
    <property type="protein sequence ID" value="ENSP00000386787.3"/>
    <property type="RefSeq nucleotide sequence ID" value="NM_001131007.2"/>
    <property type="RefSeq protein sequence ID" value="NP_001124479.1"/>
</dbReference>
<dbReference type="UCSC" id="uc003inm.5">
    <molecule id="A2VDJ0-1"/>
    <property type="organism name" value="human"/>
</dbReference>
<dbReference type="AGR" id="HGNC:29146"/>
<dbReference type="CTD" id="23240"/>
<dbReference type="DisGeNET" id="23240"/>
<dbReference type="GeneCards" id="TMEM131L"/>
<dbReference type="HGNC" id="HGNC:29146">
    <property type="gene designation" value="TMEM131L"/>
</dbReference>
<dbReference type="HPA" id="ENSG00000121210">
    <property type="expression patterns" value="Tissue enhanced (bone marrow, lymphoid tissue)"/>
</dbReference>
<dbReference type="MIM" id="616243">
    <property type="type" value="gene"/>
</dbReference>
<dbReference type="neXtProt" id="NX_A2VDJ0"/>
<dbReference type="OpenTargets" id="ENSG00000121210"/>
<dbReference type="PharmGKB" id="PA128394615"/>
<dbReference type="VEuPathDB" id="HostDB:ENSG00000121210"/>
<dbReference type="eggNOG" id="KOG3620">
    <property type="taxonomic scope" value="Eukaryota"/>
</dbReference>
<dbReference type="GeneTree" id="ENSGT00530000063614"/>
<dbReference type="InParanoid" id="A2VDJ0"/>
<dbReference type="OMA" id="FINSPPY"/>
<dbReference type="OrthoDB" id="168404at2759"/>
<dbReference type="PAN-GO" id="A2VDJ0">
    <property type="GO annotations" value="2 GO annotations based on evolutionary models"/>
</dbReference>
<dbReference type="PhylomeDB" id="A2VDJ0"/>
<dbReference type="TreeFam" id="TF321435"/>
<dbReference type="PathwayCommons" id="A2VDJ0"/>
<dbReference type="SignaLink" id="A2VDJ0"/>
<dbReference type="BioGRID-ORCS" id="23240">
    <property type="hits" value="14 hits in 1172 CRISPR screens"/>
</dbReference>
<dbReference type="ChiTaRS" id="KIAA0922">
    <property type="organism name" value="human"/>
</dbReference>
<dbReference type="GeneWiki" id="KIAA0922"/>
<dbReference type="GenomeRNAi" id="23240"/>
<dbReference type="Pharos" id="A2VDJ0">
    <property type="development level" value="Tbio"/>
</dbReference>
<dbReference type="PRO" id="PR:A2VDJ0"/>
<dbReference type="Proteomes" id="UP000005640">
    <property type="component" value="Chromosome 4"/>
</dbReference>
<dbReference type="RNAct" id="A2VDJ0">
    <property type="molecule type" value="protein"/>
</dbReference>
<dbReference type="Bgee" id="ENSG00000121210">
    <property type="expression patterns" value="Expressed in secondary oocyte and 159 other cell types or tissues"/>
</dbReference>
<dbReference type="ExpressionAtlas" id="A2VDJ0">
    <property type="expression patterns" value="baseline and differential"/>
</dbReference>
<dbReference type="GO" id="GO:0005737">
    <property type="term" value="C:cytoplasm"/>
    <property type="evidence" value="ECO:0000314"/>
    <property type="project" value="UniProtKB"/>
</dbReference>
<dbReference type="GO" id="GO:0005783">
    <property type="term" value="C:endoplasmic reticulum"/>
    <property type="evidence" value="ECO:0007669"/>
    <property type="project" value="UniProtKB-SubCell"/>
</dbReference>
<dbReference type="GO" id="GO:0005886">
    <property type="term" value="C:plasma membrane"/>
    <property type="evidence" value="ECO:0000314"/>
    <property type="project" value="UniProtKB"/>
</dbReference>
<dbReference type="GO" id="GO:0090090">
    <property type="term" value="P:negative regulation of canonical Wnt signaling pathway"/>
    <property type="evidence" value="ECO:0000314"/>
    <property type="project" value="UniProtKB"/>
</dbReference>
<dbReference type="GO" id="GO:0033088">
    <property type="term" value="P:negative regulation of immature T cell proliferation in thymus"/>
    <property type="evidence" value="ECO:0000315"/>
    <property type="project" value="UniProtKB"/>
</dbReference>
<dbReference type="GO" id="GO:0016055">
    <property type="term" value="P:Wnt signaling pathway"/>
    <property type="evidence" value="ECO:0007669"/>
    <property type="project" value="UniProtKB-KW"/>
</dbReference>
<dbReference type="FunFam" id="2.60.40.10:FF:000687">
    <property type="entry name" value="transmembrane protein 131-like isoform X3"/>
    <property type="match status" value="1"/>
</dbReference>
<dbReference type="Gene3D" id="2.60.40.10">
    <property type="entry name" value="Immunoglobulins"/>
    <property type="match status" value="1"/>
</dbReference>
<dbReference type="InterPro" id="IPR013783">
    <property type="entry name" value="Ig-like_fold"/>
</dbReference>
<dbReference type="InterPro" id="IPR055435">
    <property type="entry name" value="Ig_TMEM131L_3"/>
</dbReference>
<dbReference type="InterPro" id="IPR055436">
    <property type="entry name" value="Ig_TMEM131L_4"/>
</dbReference>
<dbReference type="InterPro" id="IPR055437">
    <property type="entry name" value="Ig_TMEM131L_5"/>
</dbReference>
<dbReference type="InterPro" id="IPR039877">
    <property type="entry name" value="TMEM131-like"/>
</dbReference>
<dbReference type="InterPro" id="IPR045695">
    <property type="entry name" value="TMEM131-like_Ig_dom2"/>
</dbReference>
<dbReference type="InterPro" id="IPR022113">
    <property type="entry name" value="TMEM131-like_N"/>
</dbReference>
<dbReference type="PANTHER" id="PTHR22050">
    <property type="entry name" value="RW1 PROTEIN HOMOLOG"/>
    <property type="match status" value="1"/>
</dbReference>
<dbReference type="PANTHER" id="PTHR22050:SF2">
    <property type="entry name" value="TRANSMEMBRANE PROTEIN 131-LIKE"/>
    <property type="match status" value="1"/>
</dbReference>
<dbReference type="Pfam" id="PF19532">
    <property type="entry name" value="Ig_TMEM131L_2nd"/>
    <property type="match status" value="1"/>
</dbReference>
<dbReference type="Pfam" id="PF24498">
    <property type="entry name" value="Ig_TMEM131L_3"/>
    <property type="match status" value="1"/>
</dbReference>
<dbReference type="Pfam" id="PF24499">
    <property type="entry name" value="Ig_TMEM131L_4"/>
    <property type="match status" value="1"/>
</dbReference>
<dbReference type="Pfam" id="PF24501">
    <property type="entry name" value="Ig_TMEM131L_5"/>
    <property type="match status" value="1"/>
</dbReference>
<dbReference type="Pfam" id="PF12371">
    <property type="entry name" value="TMEM131_like_N"/>
    <property type="match status" value="1"/>
</dbReference>
<keyword id="KW-0025">Alternative splicing</keyword>
<keyword id="KW-1003">Cell membrane</keyword>
<keyword id="KW-0963">Cytoplasm</keyword>
<keyword id="KW-0256">Endoplasmic reticulum</keyword>
<keyword id="KW-0325">Glycoprotein</keyword>
<keyword id="KW-0472">Membrane</keyword>
<keyword id="KW-0597">Phosphoprotein</keyword>
<keyword id="KW-1267">Proteomics identification</keyword>
<keyword id="KW-1185">Reference proteome</keyword>
<keyword id="KW-0732">Signal</keyword>
<keyword id="KW-0812">Transmembrane</keyword>
<keyword id="KW-1133">Transmembrane helix</keyword>
<keyword id="KW-0879">Wnt signaling pathway</keyword>
<accession>A2VDJ0</accession>
<accession>B3KRV3</accession>
<accession>D3DP10</accession>
<accession>Q7LGA7</accession>
<accession>Q86Y92</accession>
<accession>Q8WU56</accession>
<accession>Q9H065</accession>
<accession>Q9Y2D7</accession>
<name>T131L_HUMAN</name>
<reference key="1">
    <citation type="journal article" date="2001" name="Genome Res.">
        <title>Towards a catalog of human genes and proteins: sequencing and analysis of 500 novel complete protein coding human cDNAs.</title>
        <authorList>
            <person name="Wiemann S."/>
            <person name="Weil B."/>
            <person name="Wellenreuther R."/>
            <person name="Gassenhuber J."/>
            <person name="Glassl S."/>
            <person name="Ansorge W."/>
            <person name="Boecher M."/>
            <person name="Bloecker H."/>
            <person name="Bauersachs S."/>
            <person name="Blum H."/>
            <person name="Lauber J."/>
            <person name="Duesterhoeft A."/>
            <person name="Beyer A."/>
            <person name="Koehrer K."/>
            <person name="Strack N."/>
            <person name="Mewes H.-W."/>
            <person name="Ottenwaelder B."/>
            <person name="Obermaier B."/>
            <person name="Tampe J."/>
            <person name="Heubner D."/>
            <person name="Wambutt R."/>
            <person name="Korn B."/>
            <person name="Klein M."/>
            <person name="Poustka A."/>
        </authorList>
    </citation>
    <scope>NUCLEOTIDE SEQUENCE [LARGE SCALE MRNA] (ISOFORM 2)</scope>
    <source>
        <tissue>Uterus</tissue>
    </source>
</reference>
<reference key="2">
    <citation type="journal article" date="2005" name="Nature">
        <title>Generation and annotation of the DNA sequences of human chromosomes 2 and 4.</title>
        <authorList>
            <person name="Hillier L.W."/>
            <person name="Graves T.A."/>
            <person name="Fulton R.S."/>
            <person name="Fulton L.A."/>
            <person name="Pepin K.H."/>
            <person name="Minx P."/>
            <person name="Wagner-McPherson C."/>
            <person name="Layman D."/>
            <person name="Wylie K."/>
            <person name="Sekhon M."/>
            <person name="Becker M.C."/>
            <person name="Fewell G.A."/>
            <person name="Delehaunty K.D."/>
            <person name="Miner T.L."/>
            <person name="Nash W.E."/>
            <person name="Kremitzki C."/>
            <person name="Oddy L."/>
            <person name="Du H."/>
            <person name="Sun H."/>
            <person name="Bradshaw-Cordum H."/>
            <person name="Ali J."/>
            <person name="Carter J."/>
            <person name="Cordes M."/>
            <person name="Harris A."/>
            <person name="Isak A."/>
            <person name="van Brunt A."/>
            <person name="Nguyen C."/>
            <person name="Du F."/>
            <person name="Courtney L."/>
            <person name="Kalicki J."/>
            <person name="Ozersky P."/>
            <person name="Abbott S."/>
            <person name="Armstrong J."/>
            <person name="Belter E.A."/>
            <person name="Caruso L."/>
            <person name="Cedroni M."/>
            <person name="Cotton M."/>
            <person name="Davidson T."/>
            <person name="Desai A."/>
            <person name="Elliott G."/>
            <person name="Erb T."/>
            <person name="Fronick C."/>
            <person name="Gaige T."/>
            <person name="Haakenson W."/>
            <person name="Haglund K."/>
            <person name="Holmes A."/>
            <person name="Harkins R."/>
            <person name="Kim K."/>
            <person name="Kruchowski S.S."/>
            <person name="Strong C.M."/>
            <person name="Grewal N."/>
            <person name="Goyea E."/>
            <person name="Hou S."/>
            <person name="Levy A."/>
            <person name="Martinka S."/>
            <person name="Mead K."/>
            <person name="McLellan M.D."/>
            <person name="Meyer R."/>
            <person name="Randall-Maher J."/>
            <person name="Tomlinson C."/>
            <person name="Dauphin-Kohlberg S."/>
            <person name="Kozlowicz-Reilly A."/>
            <person name="Shah N."/>
            <person name="Swearengen-Shahid S."/>
            <person name="Snider J."/>
            <person name="Strong J.T."/>
            <person name="Thompson J."/>
            <person name="Yoakum M."/>
            <person name="Leonard S."/>
            <person name="Pearman C."/>
            <person name="Trani L."/>
            <person name="Radionenko M."/>
            <person name="Waligorski J.E."/>
            <person name="Wang C."/>
            <person name="Rock S.M."/>
            <person name="Tin-Wollam A.-M."/>
            <person name="Maupin R."/>
            <person name="Latreille P."/>
            <person name="Wendl M.C."/>
            <person name="Yang S.-P."/>
            <person name="Pohl C."/>
            <person name="Wallis J.W."/>
            <person name="Spieth J."/>
            <person name="Bieri T.A."/>
            <person name="Berkowicz N."/>
            <person name="Nelson J.O."/>
            <person name="Osborne J."/>
            <person name="Ding L."/>
            <person name="Meyer R."/>
            <person name="Sabo A."/>
            <person name="Shotland Y."/>
            <person name="Sinha P."/>
            <person name="Wohldmann P.E."/>
            <person name="Cook L.L."/>
            <person name="Hickenbotham M.T."/>
            <person name="Eldred J."/>
            <person name="Williams D."/>
            <person name="Jones T.A."/>
            <person name="She X."/>
            <person name="Ciccarelli F.D."/>
            <person name="Izaurralde E."/>
            <person name="Taylor J."/>
            <person name="Schmutz J."/>
            <person name="Myers R.M."/>
            <person name="Cox D.R."/>
            <person name="Huang X."/>
            <person name="McPherson J.D."/>
            <person name="Mardis E.R."/>
            <person name="Clifton S.W."/>
            <person name="Warren W.C."/>
            <person name="Chinwalla A.T."/>
            <person name="Eddy S.R."/>
            <person name="Marra M.A."/>
            <person name="Ovcharenko I."/>
            <person name="Furey T.S."/>
            <person name="Miller W."/>
            <person name="Eichler E.E."/>
            <person name="Bork P."/>
            <person name="Suyama M."/>
            <person name="Torrents D."/>
            <person name="Waterston R.H."/>
            <person name="Wilson R.K."/>
        </authorList>
    </citation>
    <scope>NUCLEOTIDE SEQUENCE [LARGE SCALE GENOMIC DNA]</scope>
</reference>
<reference key="3">
    <citation type="submission" date="2005-09" db="EMBL/GenBank/DDBJ databases">
        <authorList>
            <person name="Mural R.J."/>
            <person name="Istrail S."/>
            <person name="Sutton G.G."/>
            <person name="Florea L."/>
            <person name="Halpern A.L."/>
            <person name="Mobarry C.M."/>
            <person name="Lippert R."/>
            <person name="Walenz B."/>
            <person name="Shatkay H."/>
            <person name="Dew I."/>
            <person name="Miller J.R."/>
            <person name="Flanigan M.J."/>
            <person name="Edwards N.J."/>
            <person name="Bolanos R."/>
            <person name="Fasulo D."/>
            <person name="Halldorsson B.V."/>
            <person name="Hannenhalli S."/>
            <person name="Turner R."/>
            <person name="Yooseph S."/>
            <person name="Lu F."/>
            <person name="Nusskern D.R."/>
            <person name="Shue B.C."/>
            <person name="Zheng X.H."/>
            <person name="Zhong F."/>
            <person name="Delcher A.L."/>
            <person name="Huson D.H."/>
            <person name="Kravitz S.A."/>
            <person name="Mouchard L."/>
            <person name="Reinert K."/>
            <person name="Remington K.A."/>
            <person name="Clark A.G."/>
            <person name="Waterman M.S."/>
            <person name="Eichler E.E."/>
            <person name="Adams M.D."/>
            <person name="Hunkapiller M.W."/>
            <person name="Myers E.W."/>
            <person name="Venter J.C."/>
        </authorList>
    </citation>
    <scope>NUCLEOTIDE SEQUENCE [LARGE SCALE GENOMIC DNA]</scope>
</reference>
<reference key="4">
    <citation type="journal article" date="2004" name="Nat. Genet.">
        <title>Complete sequencing and characterization of 21,243 full-length human cDNAs.</title>
        <authorList>
            <person name="Ota T."/>
            <person name="Suzuki Y."/>
            <person name="Nishikawa T."/>
            <person name="Otsuki T."/>
            <person name="Sugiyama T."/>
            <person name="Irie R."/>
            <person name="Wakamatsu A."/>
            <person name="Hayashi K."/>
            <person name="Sato H."/>
            <person name="Nagai K."/>
            <person name="Kimura K."/>
            <person name="Makita H."/>
            <person name="Sekine M."/>
            <person name="Obayashi M."/>
            <person name="Nishi T."/>
            <person name="Shibahara T."/>
            <person name="Tanaka T."/>
            <person name="Ishii S."/>
            <person name="Yamamoto J."/>
            <person name="Saito K."/>
            <person name="Kawai Y."/>
            <person name="Isono Y."/>
            <person name="Nakamura Y."/>
            <person name="Nagahari K."/>
            <person name="Murakami K."/>
            <person name="Yasuda T."/>
            <person name="Iwayanagi T."/>
            <person name="Wagatsuma M."/>
            <person name="Shiratori A."/>
            <person name="Sudo H."/>
            <person name="Hosoiri T."/>
            <person name="Kaku Y."/>
            <person name="Kodaira H."/>
            <person name="Kondo H."/>
            <person name="Sugawara M."/>
            <person name="Takahashi M."/>
            <person name="Kanda K."/>
            <person name="Yokoi T."/>
            <person name="Furuya T."/>
            <person name="Kikkawa E."/>
            <person name="Omura Y."/>
            <person name="Abe K."/>
            <person name="Kamihara K."/>
            <person name="Katsuta N."/>
            <person name="Sato K."/>
            <person name="Tanikawa M."/>
            <person name="Yamazaki M."/>
            <person name="Ninomiya K."/>
            <person name="Ishibashi T."/>
            <person name="Yamashita H."/>
            <person name="Murakawa K."/>
            <person name="Fujimori K."/>
            <person name="Tanai H."/>
            <person name="Kimata M."/>
            <person name="Watanabe M."/>
            <person name="Hiraoka S."/>
            <person name="Chiba Y."/>
            <person name="Ishida S."/>
            <person name="Ono Y."/>
            <person name="Takiguchi S."/>
            <person name="Watanabe S."/>
            <person name="Yosida M."/>
            <person name="Hotuta T."/>
            <person name="Kusano J."/>
            <person name="Kanehori K."/>
            <person name="Takahashi-Fujii A."/>
            <person name="Hara H."/>
            <person name="Tanase T.-O."/>
            <person name="Nomura Y."/>
            <person name="Togiya S."/>
            <person name="Komai F."/>
            <person name="Hara R."/>
            <person name="Takeuchi K."/>
            <person name="Arita M."/>
            <person name="Imose N."/>
            <person name="Musashino K."/>
            <person name="Yuuki H."/>
            <person name="Oshima A."/>
            <person name="Sasaki N."/>
            <person name="Aotsuka S."/>
            <person name="Yoshikawa Y."/>
            <person name="Matsunawa H."/>
            <person name="Ichihara T."/>
            <person name="Shiohata N."/>
            <person name="Sano S."/>
            <person name="Moriya S."/>
            <person name="Momiyama H."/>
            <person name="Satoh N."/>
            <person name="Takami S."/>
            <person name="Terashima Y."/>
            <person name="Suzuki O."/>
            <person name="Nakagawa S."/>
            <person name="Senoh A."/>
            <person name="Mizoguchi H."/>
            <person name="Goto Y."/>
            <person name="Shimizu F."/>
            <person name="Wakebe H."/>
            <person name="Hishigaki H."/>
            <person name="Watanabe T."/>
            <person name="Sugiyama A."/>
            <person name="Takemoto M."/>
            <person name="Kawakami B."/>
            <person name="Yamazaki M."/>
            <person name="Watanabe K."/>
            <person name="Kumagai A."/>
            <person name="Itakura S."/>
            <person name="Fukuzumi Y."/>
            <person name="Fujimori Y."/>
            <person name="Komiyama M."/>
            <person name="Tashiro H."/>
            <person name="Tanigami A."/>
            <person name="Fujiwara T."/>
            <person name="Ono T."/>
            <person name="Yamada K."/>
            <person name="Fujii Y."/>
            <person name="Ozaki K."/>
            <person name="Hirao M."/>
            <person name="Ohmori Y."/>
            <person name="Kawabata A."/>
            <person name="Hikiji T."/>
            <person name="Kobatake N."/>
            <person name="Inagaki H."/>
            <person name="Ikema Y."/>
            <person name="Okamoto S."/>
            <person name="Okitani R."/>
            <person name="Kawakami T."/>
            <person name="Noguchi S."/>
            <person name="Itoh T."/>
            <person name="Shigeta K."/>
            <person name="Senba T."/>
            <person name="Matsumura K."/>
            <person name="Nakajima Y."/>
            <person name="Mizuno T."/>
            <person name="Morinaga M."/>
            <person name="Sasaki M."/>
            <person name="Togashi T."/>
            <person name="Oyama M."/>
            <person name="Hata H."/>
            <person name="Watanabe M."/>
            <person name="Komatsu T."/>
            <person name="Mizushima-Sugano J."/>
            <person name="Satoh T."/>
            <person name="Shirai Y."/>
            <person name="Takahashi Y."/>
            <person name="Nakagawa K."/>
            <person name="Okumura K."/>
            <person name="Nagase T."/>
            <person name="Nomura N."/>
            <person name="Kikuchi H."/>
            <person name="Masuho Y."/>
            <person name="Yamashita R."/>
            <person name="Nakai K."/>
            <person name="Yada T."/>
            <person name="Nakamura Y."/>
            <person name="Ohara O."/>
            <person name="Isogai T."/>
            <person name="Sugano S."/>
        </authorList>
    </citation>
    <scope>NUCLEOTIDE SEQUENCE [LARGE SCALE MRNA] OF 1-1053 (ISOFORM 4)</scope>
    <source>
        <tissue>Tongue</tissue>
    </source>
</reference>
<reference key="5">
    <citation type="journal article" date="2004" name="Genome Res.">
        <title>The status, quality, and expansion of the NIH full-length cDNA project: the Mammalian Gene Collection (MGC).</title>
        <authorList>
            <consortium name="The MGC Project Team"/>
        </authorList>
    </citation>
    <scope>NUCLEOTIDE SEQUENCE [LARGE SCALE MRNA] OF 60-1609 (ISOFORM 1)</scope>
    <scope>NUCLEOTIDE SEQUENCE [LARGE SCALE MRNA] OF 140-1609 (ISOFORM 3)</scope>
    <scope>VARIANT THR-645</scope>
    <source>
        <tissue>Lymph</tissue>
        <tissue>Muscle</tissue>
    </source>
</reference>
<reference key="6">
    <citation type="journal article" date="1999" name="DNA Res.">
        <title>Prediction of the coding sequences of unidentified human genes. XIII. The complete sequences of 100 new cDNA clones from brain which code for large proteins in vitro.</title>
        <authorList>
            <person name="Nagase T."/>
            <person name="Ishikawa K."/>
            <person name="Suyama M."/>
            <person name="Kikuno R."/>
            <person name="Hirosawa M."/>
            <person name="Miyajima N."/>
            <person name="Tanaka A."/>
            <person name="Kotani H."/>
            <person name="Nomura N."/>
            <person name="Ohara O."/>
        </authorList>
    </citation>
    <scope>NUCLEOTIDE SEQUENCE [LARGE SCALE MRNA] OF 820-1609</scope>
    <source>
        <tissue>Brain</tissue>
    </source>
</reference>
<reference key="7">
    <citation type="journal article" date="2008" name="Proc. Natl. Acad. Sci. U.S.A.">
        <title>A quantitative atlas of mitotic phosphorylation.</title>
        <authorList>
            <person name="Dephoure N."/>
            <person name="Zhou C."/>
            <person name="Villen J."/>
            <person name="Beausoleil S.A."/>
            <person name="Bakalarski C.E."/>
            <person name="Elledge S.J."/>
            <person name="Gygi S.P."/>
        </authorList>
    </citation>
    <scope>PHOSPHORYLATION [LARGE SCALE ANALYSIS] AT SER-1122</scope>
    <scope>IDENTIFICATION BY MASS SPECTROMETRY [LARGE SCALE ANALYSIS]</scope>
    <source>
        <tissue>Cervix carcinoma</tissue>
    </source>
</reference>
<reference key="8">
    <citation type="journal article" date="2009" name="Sci. Signal.">
        <title>Quantitative phosphoproteomic analysis of T cell receptor signaling reveals system-wide modulation of protein-protein interactions.</title>
        <authorList>
            <person name="Mayya V."/>
            <person name="Lundgren D.H."/>
            <person name="Hwang S.-I."/>
            <person name="Rezaul K."/>
            <person name="Wu L."/>
            <person name="Eng J.K."/>
            <person name="Rodionov V."/>
            <person name="Han D.K."/>
        </authorList>
    </citation>
    <scope>IDENTIFICATION BY MASS SPECTROMETRY [LARGE SCALE ANALYSIS]</scope>
    <source>
        <tissue>Leukemic T-cell</tissue>
    </source>
</reference>
<reference key="9">
    <citation type="journal article" date="2011" name="BMC Syst. Biol.">
        <title>Initial characterization of the human central proteome.</title>
        <authorList>
            <person name="Burkard T.R."/>
            <person name="Planyavsky M."/>
            <person name="Kaupe I."/>
            <person name="Breitwieser F.P."/>
            <person name="Buerckstuemmer T."/>
            <person name="Bennett K.L."/>
            <person name="Superti-Furga G."/>
            <person name="Colinge J."/>
        </authorList>
    </citation>
    <scope>IDENTIFICATION BY MASS SPECTROMETRY [LARGE SCALE ANALYSIS]</scope>
</reference>
<reference key="10">
    <citation type="journal article" date="2013" name="J. Immunol.">
        <title>Identification of TMEM131L as a novel regulator of thymocyte proliferation in humans.</title>
        <authorList>
            <person name="Maharzi N."/>
            <person name="Parietti V."/>
            <person name="Nelson E."/>
            <person name="Denti S."/>
            <person name="Robledo-Sarmiento M."/>
            <person name="Setterblad N."/>
            <person name="Parcelier A."/>
            <person name="Pla M."/>
            <person name="Sigaux F."/>
            <person name="Gluckman J.C."/>
            <person name="Canque B."/>
        </authorList>
    </citation>
    <scope>FUNCTION (ISOFORM 1)</scope>
    <scope>SUBCELLULAR LOCATION (ISOFORMS 1 AND 5)</scope>
    <scope>TISSUE SPECIFICITY</scope>
    <scope>DEVELOPMENTAL STAGE</scope>
</reference>